<comment type="function">
    <text evidence="2">Component of the ubiquinol-cytochrome c reductase complex (complex III or cytochrome b-c1 complex) that is part of the mitochondrial respiratory chain. The b-c1 complex mediates electron transfer from ubiquinol to cytochrome c. Contributes to the generation of a proton gradient across the mitochondrial membrane that is then used for ATP synthesis.</text>
</comment>
<comment type="cofactor">
    <cofactor evidence="2">
        <name>heme b</name>
        <dbReference type="ChEBI" id="CHEBI:60344"/>
    </cofactor>
    <text evidence="2">Binds 2 heme b groups non-covalently.</text>
</comment>
<comment type="subunit">
    <text evidence="2">The cytochrome bc1 complex contains 11 subunits: 3 respiratory subunits (MT-CYB, CYC1 and UQCRFS1), 2 core proteins (UQCRC1 and UQCRC2) and 6 low-molecular weight proteins (UQCRH/QCR6, UQCRB/QCR7, UQCRQ/QCR8, UQCR10/QCR9, UQCR11/QCR10 and a cleavage product of UQCRFS1). This cytochrome bc1 complex then forms a dimer.</text>
</comment>
<comment type="subcellular location">
    <subcellularLocation>
        <location evidence="2">Mitochondrion inner membrane</location>
        <topology evidence="2">Multi-pass membrane protein</topology>
    </subcellularLocation>
</comment>
<comment type="miscellaneous">
    <text evidence="1">Heme 1 (or BL or b562) is low-potential and absorbs at about 562 nm, and heme 2 (or BH or b566) is high-potential and absorbs at about 566 nm.</text>
</comment>
<comment type="similarity">
    <text evidence="3 4">Belongs to the cytochrome b family.</text>
</comment>
<comment type="caution">
    <text evidence="2">The full-length protein contains only eight transmembrane helices, not nine as predicted by bioinformatics tools.</text>
</comment>
<gene>
    <name type="primary">MT-CYB</name>
    <name type="synonym">COB</name>
    <name type="synonym">CYTB</name>
    <name type="synonym">MTCYB</name>
</gene>
<name>CYB_MASMZ</name>
<protein>
    <recommendedName>
        <fullName>Cytochrome b</fullName>
    </recommendedName>
    <alternativeName>
        <fullName>Complex III subunit 3</fullName>
    </alternativeName>
    <alternativeName>
        <fullName>Complex III subunit III</fullName>
    </alternativeName>
    <alternativeName>
        <fullName>Cytochrome b-c1 complex subunit 3</fullName>
    </alternativeName>
    <alternativeName>
        <fullName>Ubiquinol-cytochrome-c reductase complex cytochrome b subunit</fullName>
    </alternativeName>
</protein>
<sequence length="379" mass="43143">MTNLRKTHPLMKIINHTFIDLPAPSNFSAWWNFGSLLGICLILQIITGLFLAMHYTADTESAFSSVTHICRDVNYGWMIRYMHANGASMFFICLFIHIGRGMYYGSYLFLETWNIGVILLFTTMATAFMGYVLPWGQMSFWGATVITNLLSAIPYIGTDLVQWIWGGFSVDKATLTRFFAFHFILPFIIMALAAVHLLFLHEKGSNNPTGIDSDSDKIPFHPYYTMKDIMGFLTMFLALLTLVLFYPDALGDPDNYTPANPLVTPPHIKPEWYFLFAYAILRSIPNKLGGVVALMLSILILIFLPMMHTSKQRGMMFRPLSQCMFWILVANLLTLTWIGGQPVEPPFIMIGQLASLSYFLIILIIMPSISLLENKFMKW</sequence>
<proteinExistence type="inferred from homology"/>
<keyword id="KW-0249">Electron transport</keyword>
<keyword id="KW-0349">Heme</keyword>
<keyword id="KW-0408">Iron</keyword>
<keyword id="KW-0472">Membrane</keyword>
<keyword id="KW-0479">Metal-binding</keyword>
<keyword id="KW-0496">Mitochondrion</keyword>
<keyword id="KW-0999">Mitochondrion inner membrane</keyword>
<keyword id="KW-0679">Respiratory chain</keyword>
<keyword id="KW-0812">Transmembrane</keyword>
<keyword id="KW-1133">Transmembrane helix</keyword>
<keyword id="KW-0813">Transport</keyword>
<keyword id="KW-0830">Ubiquinone</keyword>
<dbReference type="EMBL" id="AJ389533">
    <property type="protein sequence ID" value="CAC80528.1"/>
    <property type="molecule type" value="Genomic_DNA"/>
</dbReference>
<dbReference type="SMR" id="Q8W9F9"/>
<dbReference type="GO" id="GO:0005743">
    <property type="term" value="C:mitochondrial inner membrane"/>
    <property type="evidence" value="ECO:0007669"/>
    <property type="project" value="UniProtKB-SubCell"/>
</dbReference>
<dbReference type="GO" id="GO:0045275">
    <property type="term" value="C:respiratory chain complex III"/>
    <property type="evidence" value="ECO:0007669"/>
    <property type="project" value="InterPro"/>
</dbReference>
<dbReference type="GO" id="GO:0046872">
    <property type="term" value="F:metal ion binding"/>
    <property type="evidence" value="ECO:0007669"/>
    <property type="project" value="UniProtKB-KW"/>
</dbReference>
<dbReference type="GO" id="GO:0008121">
    <property type="term" value="F:ubiquinol-cytochrome-c reductase activity"/>
    <property type="evidence" value="ECO:0007669"/>
    <property type="project" value="InterPro"/>
</dbReference>
<dbReference type="GO" id="GO:0006122">
    <property type="term" value="P:mitochondrial electron transport, ubiquinol to cytochrome c"/>
    <property type="evidence" value="ECO:0007669"/>
    <property type="project" value="TreeGrafter"/>
</dbReference>
<dbReference type="CDD" id="cd00290">
    <property type="entry name" value="cytochrome_b_C"/>
    <property type="match status" value="1"/>
</dbReference>
<dbReference type="CDD" id="cd00284">
    <property type="entry name" value="Cytochrome_b_N"/>
    <property type="match status" value="1"/>
</dbReference>
<dbReference type="FunFam" id="1.20.810.10:FF:000002">
    <property type="entry name" value="Cytochrome b"/>
    <property type="match status" value="1"/>
</dbReference>
<dbReference type="Gene3D" id="1.20.810.10">
    <property type="entry name" value="Cytochrome Bc1 Complex, Chain C"/>
    <property type="match status" value="1"/>
</dbReference>
<dbReference type="InterPro" id="IPR005798">
    <property type="entry name" value="Cyt_b/b6_C"/>
</dbReference>
<dbReference type="InterPro" id="IPR036150">
    <property type="entry name" value="Cyt_b/b6_C_sf"/>
</dbReference>
<dbReference type="InterPro" id="IPR005797">
    <property type="entry name" value="Cyt_b/b6_N"/>
</dbReference>
<dbReference type="InterPro" id="IPR027387">
    <property type="entry name" value="Cytb/b6-like_sf"/>
</dbReference>
<dbReference type="InterPro" id="IPR030689">
    <property type="entry name" value="Cytochrome_b"/>
</dbReference>
<dbReference type="InterPro" id="IPR048260">
    <property type="entry name" value="Cytochrome_b_C_euk/bac"/>
</dbReference>
<dbReference type="InterPro" id="IPR048259">
    <property type="entry name" value="Cytochrome_b_N_euk/bac"/>
</dbReference>
<dbReference type="InterPro" id="IPR016174">
    <property type="entry name" value="Di-haem_cyt_TM"/>
</dbReference>
<dbReference type="PANTHER" id="PTHR19271">
    <property type="entry name" value="CYTOCHROME B"/>
    <property type="match status" value="1"/>
</dbReference>
<dbReference type="PANTHER" id="PTHR19271:SF16">
    <property type="entry name" value="CYTOCHROME B"/>
    <property type="match status" value="1"/>
</dbReference>
<dbReference type="Pfam" id="PF00032">
    <property type="entry name" value="Cytochrom_B_C"/>
    <property type="match status" value="1"/>
</dbReference>
<dbReference type="Pfam" id="PF00033">
    <property type="entry name" value="Cytochrome_B"/>
    <property type="match status" value="1"/>
</dbReference>
<dbReference type="PIRSF" id="PIRSF038885">
    <property type="entry name" value="COB"/>
    <property type="match status" value="1"/>
</dbReference>
<dbReference type="SUPFAM" id="SSF81648">
    <property type="entry name" value="a domain/subunit of cytochrome bc1 complex (Ubiquinol-cytochrome c reductase)"/>
    <property type="match status" value="1"/>
</dbReference>
<dbReference type="SUPFAM" id="SSF81342">
    <property type="entry name" value="Transmembrane di-heme cytochromes"/>
    <property type="match status" value="1"/>
</dbReference>
<dbReference type="PROSITE" id="PS51003">
    <property type="entry name" value="CYTB_CTER"/>
    <property type="match status" value="1"/>
</dbReference>
<dbReference type="PROSITE" id="PS51002">
    <property type="entry name" value="CYTB_NTER"/>
    <property type="match status" value="1"/>
</dbReference>
<feature type="chain" id="PRO_0000061164" description="Cytochrome b">
    <location>
        <begin position="1"/>
        <end position="379"/>
    </location>
</feature>
<feature type="transmembrane region" description="Helical" evidence="2">
    <location>
        <begin position="33"/>
        <end position="53"/>
    </location>
</feature>
<feature type="transmembrane region" description="Helical" evidence="2">
    <location>
        <begin position="77"/>
        <end position="98"/>
    </location>
</feature>
<feature type="transmembrane region" description="Helical" evidence="2">
    <location>
        <begin position="113"/>
        <end position="133"/>
    </location>
</feature>
<feature type="transmembrane region" description="Helical" evidence="2">
    <location>
        <begin position="178"/>
        <end position="198"/>
    </location>
</feature>
<feature type="transmembrane region" description="Helical" evidence="2">
    <location>
        <begin position="226"/>
        <end position="246"/>
    </location>
</feature>
<feature type="transmembrane region" description="Helical" evidence="2">
    <location>
        <begin position="288"/>
        <end position="308"/>
    </location>
</feature>
<feature type="transmembrane region" description="Helical" evidence="2">
    <location>
        <begin position="320"/>
        <end position="340"/>
    </location>
</feature>
<feature type="transmembrane region" description="Helical" evidence="2">
    <location>
        <begin position="347"/>
        <end position="367"/>
    </location>
</feature>
<feature type="binding site" description="axial binding residue" evidence="2">
    <location>
        <position position="83"/>
    </location>
    <ligand>
        <name>heme b</name>
        <dbReference type="ChEBI" id="CHEBI:60344"/>
        <label>b562</label>
    </ligand>
    <ligandPart>
        <name>Fe</name>
        <dbReference type="ChEBI" id="CHEBI:18248"/>
    </ligandPart>
</feature>
<feature type="binding site" description="axial binding residue" evidence="2">
    <location>
        <position position="97"/>
    </location>
    <ligand>
        <name>heme b</name>
        <dbReference type="ChEBI" id="CHEBI:60344"/>
        <label>b566</label>
    </ligand>
    <ligandPart>
        <name>Fe</name>
        <dbReference type="ChEBI" id="CHEBI:18248"/>
    </ligandPart>
</feature>
<feature type="binding site" description="axial binding residue" evidence="2">
    <location>
        <position position="182"/>
    </location>
    <ligand>
        <name>heme b</name>
        <dbReference type="ChEBI" id="CHEBI:60344"/>
        <label>b562</label>
    </ligand>
    <ligandPart>
        <name>Fe</name>
        <dbReference type="ChEBI" id="CHEBI:18248"/>
    </ligandPart>
</feature>
<feature type="binding site" description="axial binding residue" evidence="2">
    <location>
        <position position="196"/>
    </location>
    <ligand>
        <name>heme b</name>
        <dbReference type="ChEBI" id="CHEBI:60344"/>
        <label>b566</label>
    </ligand>
    <ligandPart>
        <name>Fe</name>
        <dbReference type="ChEBI" id="CHEBI:18248"/>
    </ligandPart>
</feature>
<feature type="binding site" evidence="2">
    <location>
        <position position="201"/>
    </location>
    <ligand>
        <name>a ubiquinone</name>
        <dbReference type="ChEBI" id="CHEBI:16389"/>
    </ligand>
</feature>
<evidence type="ECO:0000250" key="1"/>
<evidence type="ECO:0000250" key="2">
    <source>
        <dbReference type="UniProtKB" id="P00157"/>
    </source>
</evidence>
<evidence type="ECO:0000255" key="3">
    <source>
        <dbReference type="PROSITE-ProRule" id="PRU00967"/>
    </source>
</evidence>
<evidence type="ECO:0000255" key="4">
    <source>
        <dbReference type="PROSITE-ProRule" id="PRU00968"/>
    </source>
</evidence>
<geneLocation type="mitochondrion"/>
<organism>
    <name type="scientific">Massoutiera mzabi</name>
    <name type="common">Mzab gundi</name>
    <dbReference type="NCBI Taxonomy" id="92483"/>
    <lineage>
        <taxon>Eukaryota</taxon>
        <taxon>Metazoa</taxon>
        <taxon>Chordata</taxon>
        <taxon>Craniata</taxon>
        <taxon>Vertebrata</taxon>
        <taxon>Euteleostomi</taxon>
        <taxon>Mammalia</taxon>
        <taxon>Eutheria</taxon>
        <taxon>Euarchontoglires</taxon>
        <taxon>Glires</taxon>
        <taxon>Rodentia</taxon>
        <taxon>Hystricomorpha</taxon>
        <taxon>Ctenodactylidae</taxon>
        <taxon>Massoutiera</taxon>
    </lineage>
</organism>
<accession>Q8W9F9</accession>
<reference key="1">
    <citation type="submission" date="1999-08" db="EMBL/GenBank/DDBJ databases">
        <title>Monophyly of Anomaluromorpha (Pedetidae and Anomaluridae) among sciurognath rodents evidenced by the mitochondrial cytochrome b and 12S rRNA.</title>
        <authorList>
            <person name="Montgelard C."/>
            <person name="Bentz S."/>
            <person name="Tirard C."/>
            <person name="Verneau O."/>
            <person name="Catzeflis F.M."/>
        </authorList>
    </citation>
    <scope>NUCLEOTIDE SEQUENCE [GENOMIC DNA]</scope>
    <source>
        <strain>Isolate T-390</strain>
    </source>
</reference>